<evidence type="ECO:0000255" key="1">
    <source>
        <dbReference type="HAMAP-Rule" id="MF_00124"/>
    </source>
</evidence>
<accession>Q71WN4</accession>
<organism>
    <name type="scientific">Listeria monocytogenes serotype 4b (strain F2365)</name>
    <dbReference type="NCBI Taxonomy" id="265669"/>
    <lineage>
        <taxon>Bacteria</taxon>
        <taxon>Bacillati</taxon>
        <taxon>Bacillota</taxon>
        <taxon>Bacilli</taxon>
        <taxon>Bacillales</taxon>
        <taxon>Listeriaceae</taxon>
        <taxon>Listeria</taxon>
    </lineage>
</organism>
<dbReference type="EC" id="2.7.1.21" evidence="1"/>
<dbReference type="EMBL" id="AE017262">
    <property type="protein sequence ID" value="AAT05282.1"/>
    <property type="molecule type" value="Genomic_DNA"/>
</dbReference>
<dbReference type="RefSeq" id="WP_003726352.1">
    <property type="nucleotide sequence ID" value="NC_002973.6"/>
</dbReference>
<dbReference type="SMR" id="Q71WN4"/>
<dbReference type="KEGG" id="lmf:LMOf2365_2517"/>
<dbReference type="HOGENOM" id="CLU_064400_2_2_9"/>
<dbReference type="GO" id="GO:0005829">
    <property type="term" value="C:cytosol"/>
    <property type="evidence" value="ECO:0007669"/>
    <property type="project" value="TreeGrafter"/>
</dbReference>
<dbReference type="GO" id="GO:0005524">
    <property type="term" value="F:ATP binding"/>
    <property type="evidence" value="ECO:0007669"/>
    <property type="project" value="UniProtKB-UniRule"/>
</dbReference>
<dbReference type="GO" id="GO:0004797">
    <property type="term" value="F:thymidine kinase activity"/>
    <property type="evidence" value="ECO:0007669"/>
    <property type="project" value="UniProtKB-UniRule"/>
</dbReference>
<dbReference type="GO" id="GO:0008270">
    <property type="term" value="F:zinc ion binding"/>
    <property type="evidence" value="ECO:0007669"/>
    <property type="project" value="UniProtKB-UniRule"/>
</dbReference>
<dbReference type="GO" id="GO:0071897">
    <property type="term" value="P:DNA biosynthetic process"/>
    <property type="evidence" value="ECO:0007669"/>
    <property type="project" value="UniProtKB-KW"/>
</dbReference>
<dbReference type="GO" id="GO:0046104">
    <property type="term" value="P:thymidine metabolic process"/>
    <property type="evidence" value="ECO:0007669"/>
    <property type="project" value="TreeGrafter"/>
</dbReference>
<dbReference type="FunFam" id="3.30.60.20:FF:000062">
    <property type="entry name" value="Thymidine kinase"/>
    <property type="match status" value="1"/>
</dbReference>
<dbReference type="Gene3D" id="3.30.60.20">
    <property type="match status" value="1"/>
</dbReference>
<dbReference type="Gene3D" id="3.40.50.300">
    <property type="entry name" value="P-loop containing nucleotide triphosphate hydrolases"/>
    <property type="match status" value="1"/>
</dbReference>
<dbReference type="HAMAP" id="MF_00124">
    <property type="entry name" value="Thymidine_kinase"/>
    <property type="match status" value="1"/>
</dbReference>
<dbReference type="InterPro" id="IPR027417">
    <property type="entry name" value="P-loop_NTPase"/>
</dbReference>
<dbReference type="InterPro" id="IPR001267">
    <property type="entry name" value="Thymidine_kinase"/>
</dbReference>
<dbReference type="InterPro" id="IPR020633">
    <property type="entry name" value="Thymidine_kinase_CS"/>
</dbReference>
<dbReference type="NCBIfam" id="NF003299">
    <property type="entry name" value="PRK04296.1-4"/>
    <property type="match status" value="1"/>
</dbReference>
<dbReference type="NCBIfam" id="NF003300">
    <property type="entry name" value="PRK04296.1-5"/>
    <property type="match status" value="1"/>
</dbReference>
<dbReference type="PANTHER" id="PTHR11441">
    <property type="entry name" value="THYMIDINE KINASE"/>
    <property type="match status" value="1"/>
</dbReference>
<dbReference type="PANTHER" id="PTHR11441:SF0">
    <property type="entry name" value="THYMIDINE KINASE, CYTOSOLIC"/>
    <property type="match status" value="1"/>
</dbReference>
<dbReference type="Pfam" id="PF00265">
    <property type="entry name" value="TK"/>
    <property type="match status" value="1"/>
</dbReference>
<dbReference type="PIRSF" id="PIRSF035805">
    <property type="entry name" value="TK_cell"/>
    <property type="match status" value="1"/>
</dbReference>
<dbReference type="SUPFAM" id="SSF57716">
    <property type="entry name" value="Glucocorticoid receptor-like (DNA-binding domain)"/>
    <property type="match status" value="1"/>
</dbReference>
<dbReference type="SUPFAM" id="SSF52540">
    <property type="entry name" value="P-loop containing nucleoside triphosphate hydrolases"/>
    <property type="match status" value="1"/>
</dbReference>
<dbReference type="PROSITE" id="PS00603">
    <property type="entry name" value="TK_CELLULAR_TYPE"/>
    <property type="match status" value="1"/>
</dbReference>
<name>KITH_LISMF</name>
<gene>
    <name evidence="1" type="primary">tdk</name>
    <name type="ordered locus">LMOf2365_2517</name>
</gene>
<feature type="chain" id="PRO_0000174989" description="Thymidine kinase">
    <location>
        <begin position="1"/>
        <end position="191"/>
    </location>
</feature>
<feature type="active site" description="Proton acceptor" evidence="1">
    <location>
        <position position="86"/>
    </location>
</feature>
<feature type="binding site" evidence="1">
    <location>
        <begin position="9"/>
        <end position="16"/>
    </location>
    <ligand>
        <name>ATP</name>
        <dbReference type="ChEBI" id="CHEBI:30616"/>
    </ligand>
</feature>
<feature type="binding site" evidence="1">
    <location>
        <begin position="85"/>
        <end position="88"/>
    </location>
    <ligand>
        <name>ATP</name>
        <dbReference type="ChEBI" id="CHEBI:30616"/>
    </ligand>
</feature>
<feature type="binding site" evidence="1">
    <location>
        <position position="143"/>
    </location>
    <ligand>
        <name>Zn(2+)</name>
        <dbReference type="ChEBI" id="CHEBI:29105"/>
    </ligand>
</feature>
<feature type="binding site" evidence="1">
    <location>
        <position position="146"/>
    </location>
    <ligand>
        <name>Zn(2+)</name>
        <dbReference type="ChEBI" id="CHEBI:29105"/>
    </ligand>
</feature>
<feature type="binding site" evidence="1">
    <location>
        <position position="181"/>
    </location>
    <ligand>
        <name>Zn(2+)</name>
        <dbReference type="ChEBI" id="CHEBI:29105"/>
    </ligand>
</feature>
<feature type="binding site" evidence="1">
    <location>
        <position position="184"/>
    </location>
    <ligand>
        <name>Zn(2+)</name>
        <dbReference type="ChEBI" id="CHEBI:29105"/>
    </ligand>
</feature>
<keyword id="KW-0067">ATP-binding</keyword>
<keyword id="KW-0963">Cytoplasm</keyword>
<keyword id="KW-0237">DNA synthesis</keyword>
<keyword id="KW-0418">Kinase</keyword>
<keyword id="KW-0479">Metal-binding</keyword>
<keyword id="KW-0547">Nucleotide-binding</keyword>
<keyword id="KW-0808">Transferase</keyword>
<keyword id="KW-0862">Zinc</keyword>
<comment type="catalytic activity">
    <reaction evidence="1">
        <text>thymidine + ATP = dTMP + ADP + H(+)</text>
        <dbReference type="Rhea" id="RHEA:19129"/>
        <dbReference type="ChEBI" id="CHEBI:15378"/>
        <dbReference type="ChEBI" id="CHEBI:17748"/>
        <dbReference type="ChEBI" id="CHEBI:30616"/>
        <dbReference type="ChEBI" id="CHEBI:63528"/>
        <dbReference type="ChEBI" id="CHEBI:456216"/>
        <dbReference type="EC" id="2.7.1.21"/>
    </reaction>
</comment>
<comment type="subunit">
    <text evidence="1">Homotetramer.</text>
</comment>
<comment type="subcellular location">
    <subcellularLocation>
        <location evidence="1">Cytoplasm</location>
    </subcellularLocation>
</comment>
<comment type="similarity">
    <text evidence="1">Belongs to the thymidine kinase family.</text>
</comment>
<proteinExistence type="inferred from homology"/>
<reference key="1">
    <citation type="journal article" date="2004" name="Nucleic Acids Res.">
        <title>Whole genome comparisons of serotype 4b and 1/2a strains of the food-borne pathogen Listeria monocytogenes reveal new insights into the core genome components of this species.</title>
        <authorList>
            <person name="Nelson K.E."/>
            <person name="Fouts D.E."/>
            <person name="Mongodin E.F."/>
            <person name="Ravel J."/>
            <person name="DeBoy R.T."/>
            <person name="Kolonay J.F."/>
            <person name="Rasko D.A."/>
            <person name="Angiuoli S.V."/>
            <person name="Gill S.R."/>
            <person name="Paulsen I.T."/>
            <person name="Peterson J.D."/>
            <person name="White O."/>
            <person name="Nelson W.C."/>
            <person name="Nierman W.C."/>
            <person name="Beanan M.J."/>
            <person name="Brinkac L.M."/>
            <person name="Daugherty S.C."/>
            <person name="Dodson R.J."/>
            <person name="Durkin A.S."/>
            <person name="Madupu R."/>
            <person name="Haft D.H."/>
            <person name="Selengut J."/>
            <person name="Van Aken S.E."/>
            <person name="Khouri H.M."/>
            <person name="Fedorova N."/>
            <person name="Forberger H.A."/>
            <person name="Tran B."/>
            <person name="Kathariou S."/>
            <person name="Wonderling L.D."/>
            <person name="Uhlich G.A."/>
            <person name="Bayles D.O."/>
            <person name="Luchansky J.B."/>
            <person name="Fraser C.M."/>
        </authorList>
    </citation>
    <scope>NUCLEOTIDE SEQUENCE [LARGE SCALE GENOMIC DNA]</scope>
    <source>
        <strain>F2365</strain>
    </source>
</reference>
<protein>
    <recommendedName>
        <fullName evidence="1">Thymidine kinase</fullName>
        <ecNumber evidence="1">2.7.1.21</ecNumber>
    </recommendedName>
</protein>
<sequence length="191" mass="21849">MAQLFFRYGSMNSGKTIEILKVAHNYEEQNKTVAIFTSGIDDRDQVGFISSRIGLKREATPIFSDTNIFEIVANIKPKPNCVLLDESQFLEKEHVFQLAKIVDELNIPVIAYGLKNDFRNELFEGSKYLLLYADKLEEMKTICWFCAKKATMVLRVDDKGKPVYTGEQIMIGGNDHYYPVCRKCHANPPIK</sequence>